<sequence>MSRFDTLFANLKAKNEGAFVPFVTLCDPDFDCSFEIIETLIANGADALELGFPFSDPLLDGPVIQAANKRALDGGYSTDACFEMIAKIRSKYPEIPIGLLLCANLVFVPTQDVFFKRCAETGVDAVLIADVPVLAAEEFTQAAKKHGIQSVFICPPNADQATIERIARLTEGYTYLVSRAGVTSAENQAHAKNLDNLIESLKRSNSAPILQGFGIAKPEQVKEALVLGCDGAISGSAIVKIIERNLDSQTQLLSELAKFVSVMKAATKS</sequence>
<reference key="1">
    <citation type="journal article" date="2008" name="J. Bacteriol.">
        <title>The complete genome sequence of Actinobacillus pleuropneumoniae L20 (serotype 5b).</title>
        <authorList>
            <person name="Foote S.J."/>
            <person name="Bosse J.T."/>
            <person name="Bouevitch A.B."/>
            <person name="Langford P.R."/>
            <person name="Young N.M."/>
            <person name="Nash J.H.E."/>
        </authorList>
    </citation>
    <scope>NUCLEOTIDE SEQUENCE [LARGE SCALE GENOMIC DNA]</scope>
    <source>
        <strain>L20</strain>
    </source>
</reference>
<evidence type="ECO:0000255" key="1">
    <source>
        <dbReference type="HAMAP-Rule" id="MF_00131"/>
    </source>
</evidence>
<dbReference type="EC" id="4.2.1.20" evidence="1"/>
<dbReference type="EMBL" id="CP000569">
    <property type="protein sequence ID" value="ABN73574.1"/>
    <property type="molecule type" value="Genomic_DNA"/>
</dbReference>
<dbReference type="RefSeq" id="WP_009875166.1">
    <property type="nucleotide sequence ID" value="NC_009053.1"/>
</dbReference>
<dbReference type="SMR" id="A3MZI8"/>
<dbReference type="STRING" id="416269.APL_0470"/>
<dbReference type="EnsemblBacteria" id="ABN73574">
    <property type="protein sequence ID" value="ABN73574"/>
    <property type="gene ID" value="APL_0470"/>
</dbReference>
<dbReference type="KEGG" id="apl:APL_0470"/>
<dbReference type="PATRIC" id="fig|416269.6.peg.486"/>
<dbReference type="eggNOG" id="COG0159">
    <property type="taxonomic scope" value="Bacteria"/>
</dbReference>
<dbReference type="HOGENOM" id="CLU_016734_0_4_6"/>
<dbReference type="UniPathway" id="UPA00035">
    <property type="reaction ID" value="UER00044"/>
</dbReference>
<dbReference type="Proteomes" id="UP000001432">
    <property type="component" value="Chromosome"/>
</dbReference>
<dbReference type="GO" id="GO:0005829">
    <property type="term" value="C:cytosol"/>
    <property type="evidence" value="ECO:0007669"/>
    <property type="project" value="TreeGrafter"/>
</dbReference>
<dbReference type="GO" id="GO:0004834">
    <property type="term" value="F:tryptophan synthase activity"/>
    <property type="evidence" value="ECO:0007669"/>
    <property type="project" value="UniProtKB-UniRule"/>
</dbReference>
<dbReference type="CDD" id="cd04724">
    <property type="entry name" value="Tryptophan_synthase_alpha"/>
    <property type="match status" value="1"/>
</dbReference>
<dbReference type="FunFam" id="3.20.20.70:FF:000037">
    <property type="entry name" value="Tryptophan synthase alpha chain"/>
    <property type="match status" value="1"/>
</dbReference>
<dbReference type="Gene3D" id="3.20.20.70">
    <property type="entry name" value="Aldolase class I"/>
    <property type="match status" value="1"/>
</dbReference>
<dbReference type="HAMAP" id="MF_00131">
    <property type="entry name" value="Trp_synth_alpha"/>
    <property type="match status" value="1"/>
</dbReference>
<dbReference type="InterPro" id="IPR013785">
    <property type="entry name" value="Aldolase_TIM"/>
</dbReference>
<dbReference type="InterPro" id="IPR011060">
    <property type="entry name" value="RibuloseP-bd_barrel"/>
</dbReference>
<dbReference type="InterPro" id="IPR018204">
    <property type="entry name" value="Trp_synthase_alpha_AS"/>
</dbReference>
<dbReference type="InterPro" id="IPR002028">
    <property type="entry name" value="Trp_synthase_suA"/>
</dbReference>
<dbReference type="NCBIfam" id="TIGR00262">
    <property type="entry name" value="trpA"/>
    <property type="match status" value="1"/>
</dbReference>
<dbReference type="PANTHER" id="PTHR43406:SF1">
    <property type="entry name" value="TRYPTOPHAN SYNTHASE ALPHA CHAIN, CHLOROPLASTIC"/>
    <property type="match status" value="1"/>
</dbReference>
<dbReference type="PANTHER" id="PTHR43406">
    <property type="entry name" value="TRYPTOPHAN SYNTHASE, ALPHA CHAIN"/>
    <property type="match status" value="1"/>
</dbReference>
<dbReference type="Pfam" id="PF00290">
    <property type="entry name" value="Trp_syntA"/>
    <property type="match status" value="1"/>
</dbReference>
<dbReference type="SUPFAM" id="SSF51366">
    <property type="entry name" value="Ribulose-phoshate binding barrel"/>
    <property type="match status" value="1"/>
</dbReference>
<dbReference type="PROSITE" id="PS00167">
    <property type="entry name" value="TRP_SYNTHASE_ALPHA"/>
    <property type="match status" value="1"/>
</dbReference>
<feature type="chain" id="PRO_1000018160" description="Tryptophan synthase alpha chain">
    <location>
        <begin position="1"/>
        <end position="269"/>
    </location>
</feature>
<feature type="active site" description="Proton acceptor" evidence="1">
    <location>
        <position position="49"/>
    </location>
</feature>
<feature type="active site" description="Proton acceptor" evidence="1">
    <location>
        <position position="60"/>
    </location>
</feature>
<gene>
    <name evidence="1" type="primary">trpA</name>
    <name type="ordered locus">APL_0470</name>
</gene>
<name>TRPA_ACTP2</name>
<accession>A3MZI8</accession>
<organism>
    <name type="scientific">Actinobacillus pleuropneumoniae serotype 5b (strain L20)</name>
    <dbReference type="NCBI Taxonomy" id="416269"/>
    <lineage>
        <taxon>Bacteria</taxon>
        <taxon>Pseudomonadati</taxon>
        <taxon>Pseudomonadota</taxon>
        <taxon>Gammaproteobacteria</taxon>
        <taxon>Pasteurellales</taxon>
        <taxon>Pasteurellaceae</taxon>
        <taxon>Actinobacillus</taxon>
    </lineage>
</organism>
<comment type="function">
    <text evidence="1">The alpha subunit is responsible for the aldol cleavage of indoleglycerol phosphate to indole and glyceraldehyde 3-phosphate.</text>
</comment>
<comment type="catalytic activity">
    <reaction evidence="1">
        <text>(1S,2R)-1-C-(indol-3-yl)glycerol 3-phosphate + L-serine = D-glyceraldehyde 3-phosphate + L-tryptophan + H2O</text>
        <dbReference type="Rhea" id="RHEA:10532"/>
        <dbReference type="ChEBI" id="CHEBI:15377"/>
        <dbReference type="ChEBI" id="CHEBI:33384"/>
        <dbReference type="ChEBI" id="CHEBI:57912"/>
        <dbReference type="ChEBI" id="CHEBI:58866"/>
        <dbReference type="ChEBI" id="CHEBI:59776"/>
        <dbReference type="EC" id="4.2.1.20"/>
    </reaction>
</comment>
<comment type="pathway">
    <text evidence="1">Amino-acid biosynthesis; L-tryptophan biosynthesis; L-tryptophan from chorismate: step 5/5.</text>
</comment>
<comment type="subunit">
    <text evidence="1">Tetramer of two alpha and two beta chains.</text>
</comment>
<comment type="similarity">
    <text evidence="1">Belongs to the TrpA family.</text>
</comment>
<proteinExistence type="inferred from homology"/>
<protein>
    <recommendedName>
        <fullName evidence="1">Tryptophan synthase alpha chain</fullName>
        <ecNumber evidence="1">4.2.1.20</ecNumber>
    </recommendedName>
</protein>
<keyword id="KW-0028">Amino-acid biosynthesis</keyword>
<keyword id="KW-0057">Aromatic amino acid biosynthesis</keyword>
<keyword id="KW-0456">Lyase</keyword>
<keyword id="KW-1185">Reference proteome</keyword>
<keyword id="KW-0822">Tryptophan biosynthesis</keyword>